<name>SDSL_HUMAN</name>
<comment type="function">
    <text evidence="1 2 3">Catalyzes the pyridoxal-phosphate-dependent dehydrative deamination of L-threonine and L-serine to ammonia and alpha-ketobutyrate and pyruvate, respectively (PubMed:16580895, PubMed:18342636). Also exhibits racemase activity towards L-glutamate and D-glutamate (By similarity).</text>
</comment>
<comment type="catalytic activity">
    <reaction evidence="2 3">
        <text>L-serine = pyruvate + NH4(+)</text>
        <dbReference type="Rhea" id="RHEA:19169"/>
        <dbReference type="ChEBI" id="CHEBI:15361"/>
        <dbReference type="ChEBI" id="CHEBI:28938"/>
        <dbReference type="ChEBI" id="CHEBI:33384"/>
        <dbReference type="EC" id="4.3.1.17"/>
    </reaction>
</comment>
<comment type="catalytic activity">
    <reaction evidence="2 3">
        <text>L-threonine = 2-oxobutanoate + NH4(+)</text>
        <dbReference type="Rhea" id="RHEA:22108"/>
        <dbReference type="ChEBI" id="CHEBI:16763"/>
        <dbReference type="ChEBI" id="CHEBI:28938"/>
        <dbReference type="ChEBI" id="CHEBI:57926"/>
        <dbReference type="EC" id="4.3.1.19"/>
    </reaction>
</comment>
<comment type="catalytic activity">
    <reaction evidence="1">
        <text>L-glutamate = D-glutamate</text>
        <dbReference type="Rhea" id="RHEA:12813"/>
        <dbReference type="ChEBI" id="CHEBI:29985"/>
        <dbReference type="ChEBI" id="CHEBI:29986"/>
        <dbReference type="EC" id="5.1.1.3"/>
    </reaction>
    <physiologicalReaction direction="left-to-right" evidence="1">
        <dbReference type="Rhea" id="RHEA:12814"/>
    </physiologicalReaction>
    <physiologicalReaction direction="right-to-left" evidence="1">
        <dbReference type="Rhea" id="RHEA:12815"/>
    </physiologicalReaction>
</comment>
<comment type="cofactor">
    <cofactor evidence="3">
        <name>pyridoxal 5'-phosphate</name>
        <dbReference type="ChEBI" id="CHEBI:597326"/>
    </cofactor>
</comment>
<comment type="biophysicochemical properties">
    <kinetics>
        <KM evidence="3">30 mM for L-serine</KM>
        <KM evidence="2">32.2 mM for L-serine</KM>
        <KM evidence="3">7 mM for L-threonine</KM>
        <KM evidence="2">3.1 mM for L-threonine</KM>
        <Vmax evidence="2">7.8 nmol/min/mg enzyme for L-serine</Vmax>
        <Vmax evidence="2">1.8 nmol/min/mg enzyme for L-threonine</Vmax>
    </kinetics>
</comment>
<comment type="subunit">
    <text evidence="1 2 6">Monomer (By similarity). Homodimer.</text>
</comment>
<comment type="interaction">
    <interactant intactId="EBI-744440">
        <id>Q96GA7</id>
    </interactant>
    <interactant intactId="EBI-744440">
        <id>Q96GA7</id>
        <label>SDSL</label>
    </interactant>
    <organismsDiffer>false</organismsDiffer>
    <experiments>6</experiments>
</comment>
<comment type="tissue specificity">
    <text evidence="2">Expressed in lung cancer cell lines.</text>
</comment>
<comment type="similarity">
    <text evidence="5">Belongs to the serine/threonine dehydratase family.</text>
</comment>
<feature type="chain" id="PRO_0000264624" description="Serine dehydratase-like">
    <location>
        <begin position="1"/>
        <end position="329"/>
    </location>
</feature>
<feature type="modified residue" description="N-acetylmethionine" evidence="7">
    <location>
        <position position="1"/>
    </location>
</feature>
<feature type="modified residue" description="N6-(pyridoxal phosphate)lysine" evidence="3">
    <location>
        <position position="48"/>
    </location>
</feature>
<feature type="mutagenesis site" description="Strongly increased enzyme activity towards threonine." evidence="3">
    <original>G</original>
    <variation>A</variation>
    <location>
        <position position="72"/>
    </location>
</feature>
<feature type="mutagenesis site" description="Almost no change in Km and Vmax for serine and threonine. Significantly increased protein levels." evidence="2">
    <original>L</original>
    <variation>V</variation>
    <location>
        <position position="287"/>
    </location>
</feature>
<feature type="mutagenesis site" description="Loss of enzyme activity." evidence="3">
    <original>C</original>
    <variation>A</variation>
    <location>
        <position position="309"/>
    </location>
</feature>
<feature type="strand" evidence="8">
    <location>
        <begin position="20"/>
        <end position="23"/>
    </location>
</feature>
<feature type="helix" evidence="8">
    <location>
        <begin position="24"/>
        <end position="30"/>
    </location>
</feature>
<feature type="strand" evidence="8">
    <location>
        <begin position="34"/>
        <end position="38"/>
    </location>
</feature>
<feature type="helix" evidence="8">
    <location>
        <begin position="39"/>
        <end position="41"/>
    </location>
</feature>
<feature type="helix" evidence="8">
    <location>
        <begin position="49"/>
        <end position="61"/>
    </location>
</feature>
<feature type="strand" evidence="8">
    <location>
        <begin position="66"/>
        <end position="69"/>
    </location>
</feature>
<feature type="helix" evidence="8">
    <location>
        <begin position="74"/>
        <end position="85"/>
    </location>
</feature>
<feature type="strand" evidence="8">
    <location>
        <begin position="90"/>
        <end position="94"/>
    </location>
</feature>
<feature type="helix" evidence="8">
    <location>
        <begin position="100"/>
        <end position="108"/>
    </location>
</feature>
<feature type="strand" evidence="8">
    <location>
        <begin position="112"/>
        <end position="115"/>
    </location>
</feature>
<feature type="helix" evidence="8">
    <location>
        <begin position="120"/>
        <end position="132"/>
    </location>
</feature>
<feature type="strand" evidence="8">
    <location>
        <begin position="136"/>
        <end position="138"/>
    </location>
</feature>
<feature type="helix" evidence="8">
    <location>
        <begin position="145"/>
        <end position="161"/>
    </location>
</feature>
<feature type="strand" evidence="8">
    <location>
        <begin position="162"/>
        <end position="164"/>
    </location>
</feature>
<feature type="strand" evidence="8">
    <location>
        <begin position="167"/>
        <end position="172"/>
    </location>
</feature>
<feature type="strand" evidence="8">
    <location>
        <begin position="174"/>
        <end position="176"/>
    </location>
</feature>
<feature type="helix" evidence="8">
    <location>
        <begin position="177"/>
        <end position="189"/>
    </location>
</feature>
<feature type="strand" evidence="8">
    <location>
        <begin position="196"/>
        <end position="201"/>
    </location>
</feature>
<feature type="helix" evidence="8">
    <location>
        <begin position="206"/>
        <end position="213"/>
    </location>
</feature>
<feature type="helix" evidence="8">
    <location>
        <begin position="227"/>
        <end position="229"/>
    </location>
</feature>
<feature type="helix" evidence="8">
    <location>
        <begin position="236"/>
        <end position="244"/>
    </location>
</feature>
<feature type="strand" evidence="8">
    <location>
        <begin position="247"/>
        <end position="252"/>
    </location>
</feature>
<feature type="helix" evidence="8">
    <location>
        <begin position="254"/>
        <end position="268"/>
    </location>
</feature>
<feature type="helix" evidence="8">
    <location>
        <begin position="274"/>
        <end position="284"/>
    </location>
</feature>
<feature type="helix" evidence="8">
    <location>
        <begin position="287"/>
        <end position="293"/>
    </location>
</feature>
<feature type="strand" evidence="8">
    <location>
        <begin position="304"/>
        <end position="308"/>
    </location>
</feature>
<feature type="helix" evidence="8">
    <location>
        <begin position="316"/>
        <end position="325"/>
    </location>
</feature>
<reference key="1">
    <citation type="submission" date="1999-03" db="EMBL/GenBank/DDBJ databases">
        <title>Cloning of a new human cDNA homologous to Homo sapiens serine dehydratase.</title>
        <authorList>
            <person name="Gong R.M."/>
            <person name="Yu L."/>
            <person name="Zhao S.Y."/>
        </authorList>
    </citation>
    <scope>NUCLEOTIDE SEQUENCE [MRNA]</scope>
</reference>
<reference key="2">
    <citation type="journal article" date="2004" name="Genome Res.">
        <title>The status, quality, and expansion of the NIH full-length cDNA project: the Mammalian Gene Collection (MGC).</title>
        <authorList>
            <consortium name="The MGC Project Team"/>
        </authorList>
    </citation>
    <scope>NUCLEOTIDE SEQUENCE [LARGE SCALE MRNA]</scope>
    <source>
        <tissue>Lung</tissue>
        <tissue>Placenta</tissue>
    </source>
</reference>
<reference key="3">
    <citation type="journal article" date="2006" name="Biochim. Biophys. Acta">
        <title>Enzymatic and biochemical properties of a novel human serine dehydratase isoform.</title>
        <authorList>
            <person name="Ogawa H."/>
            <person name="Gomi T."/>
            <person name="Nishizawa M."/>
            <person name="Hayakawa Y."/>
            <person name="Endo S."/>
            <person name="Hayashi K."/>
            <person name="Ochiai H."/>
            <person name="Takusagawa F."/>
            <person name="Pitot H.C."/>
            <person name="Mori H."/>
            <person name="Sakurai H."/>
            <person name="Koizumi K."/>
            <person name="Saiki I."/>
            <person name="Oda H."/>
            <person name="Fujishita T."/>
            <person name="Miwa T."/>
            <person name="Maruyama M."/>
            <person name="Kobayashi M."/>
        </authorList>
    </citation>
    <scope>FUNCTION</scope>
    <scope>CATALYTIC ACTIVITY</scope>
    <scope>BIOPHYSICOCHEMICAL PROPERTIES</scope>
    <scope>SUBUNIT</scope>
    <scope>TISSUE SPECIFICITY</scope>
    <scope>MUTAGENESIS OF LEU-287</scope>
</reference>
<reference key="4">
    <citation type="journal article" date="2011" name="BMC Syst. Biol.">
        <title>Initial characterization of the human central proteome.</title>
        <authorList>
            <person name="Burkard T.R."/>
            <person name="Planyavsky M."/>
            <person name="Kaupe I."/>
            <person name="Breitwieser F.P."/>
            <person name="Buerckstuemmer T."/>
            <person name="Bennett K.L."/>
            <person name="Superti-Furga G."/>
            <person name="Colinge J."/>
        </authorList>
    </citation>
    <scope>IDENTIFICATION BY MASS SPECTROMETRY [LARGE SCALE ANALYSIS]</scope>
</reference>
<reference key="5">
    <citation type="journal article" date="2012" name="Mol. Cell. Proteomics">
        <title>Comparative large-scale characterisation of plant vs. mammal proteins reveals similar and idiosyncratic N-alpha acetylation features.</title>
        <authorList>
            <person name="Bienvenut W.V."/>
            <person name="Sumpton D."/>
            <person name="Martinez A."/>
            <person name="Lilla S."/>
            <person name="Espagne C."/>
            <person name="Meinnel T."/>
            <person name="Giglione C."/>
        </authorList>
    </citation>
    <scope>ACETYLATION [LARGE SCALE ANALYSIS] AT MET-1</scope>
    <scope>IDENTIFICATION BY MASS SPECTROMETRY [LARGE SCALE ANALYSIS]</scope>
</reference>
<reference key="6">
    <citation type="journal article" date="2014" name="J. Proteomics">
        <title>An enzyme assisted RP-RPLC approach for in-depth analysis of human liver phosphoproteome.</title>
        <authorList>
            <person name="Bian Y."/>
            <person name="Song C."/>
            <person name="Cheng K."/>
            <person name="Dong M."/>
            <person name="Wang F."/>
            <person name="Huang J."/>
            <person name="Sun D."/>
            <person name="Wang L."/>
            <person name="Ye M."/>
            <person name="Zou H."/>
        </authorList>
    </citation>
    <scope>IDENTIFICATION BY MASS SPECTROMETRY [LARGE SCALE ANALYSIS]</scope>
    <source>
        <tissue>Liver</tissue>
    </source>
</reference>
<reference key="7">
    <citation type="journal article" date="2008" name="Biochim. Biophys. Acta">
        <title>A catalytic mechanism that explains a low catalytic activity of serine dehydratase like-1 from human cancer cells: crystal structure and site-directed mutagenesis studies.</title>
        <authorList>
            <person name="Yamada T."/>
            <person name="Komoto J."/>
            <person name="Kasuya T."/>
            <person name="Takata Y."/>
            <person name="Ogawa H."/>
            <person name="Mori H."/>
            <person name="Takusagawa F."/>
        </authorList>
    </citation>
    <scope>X-RAY CRYSTALLOGRAPHY (2.8 ANGSTROMS) OF 11-328 IN COMPLEX WITH PYRIDOXAL PHOSPHATE</scope>
    <scope>CATALYTIC ACTIVITY</scope>
    <scope>SUBUNIT</scope>
    <scope>MUTAGENESIS OF GLY-72 AND CYS-309</scope>
    <scope>BIOPHYSICOCHEMICAL PROPERTIES</scope>
    <scope>COFACTOR</scope>
    <scope>FUNCTION</scope>
</reference>
<dbReference type="EC" id="5.1.1.3" evidence="1"/>
<dbReference type="EC" id="4.3.1.17" evidence="2 3"/>
<dbReference type="EC" id="4.3.1.19" evidence="2 3"/>
<dbReference type="EMBL" id="AF134473">
    <property type="protein sequence ID" value="AAP97250.1"/>
    <property type="molecule type" value="mRNA"/>
</dbReference>
<dbReference type="EMBL" id="BC009849">
    <property type="protein sequence ID" value="AAH09849.1"/>
    <property type="molecule type" value="mRNA"/>
</dbReference>
<dbReference type="EMBL" id="BC091479">
    <property type="protein sequence ID" value="AAH91479.1"/>
    <property type="molecule type" value="mRNA"/>
</dbReference>
<dbReference type="CCDS" id="CCDS9170.1"/>
<dbReference type="RefSeq" id="NP_001291922.1">
    <property type="nucleotide sequence ID" value="NM_001304993.2"/>
</dbReference>
<dbReference type="RefSeq" id="NP_612441.1">
    <property type="nucleotide sequence ID" value="NM_138432.4"/>
</dbReference>
<dbReference type="RefSeq" id="XP_005253888.1">
    <property type="nucleotide sequence ID" value="XM_005253831.6"/>
</dbReference>
<dbReference type="RefSeq" id="XP_011536148.1">
    <property type="nucleotide sequence ID" value="XM_011537846.2"/>
</dbReference>
<dbReference type="RefSeq" id="XP_054226954.1">
    <property type="nucleotide sequence ID" value="XM_054370979.1"/>
</dbReference>
<dbReference type="PDB" id="2RKB">
    <property type="method" value="X-ray"/>
    <property type="resolution" value="2.80 A"/>
    <property type="chains" value="A/B/C/D/E=11-328"/>
</dbReference>
<dbReference type="PDBsum" id="2RKB"/>
<dbReference type="SMR" id="Q96GA7"/>
<dbReference type="BioGRID" id="125255">
    <property type="interactions" value="13"/>
</dbReference>
<dbReference type="FunCoup" id="Q96GA7">
    <property type="interactions" value="522"/>
</dbReference>
<dbReference type="IntAct" id="Q96GA7">
    <property type="interactions" value="3"/>
</dbReference>
<dbReference type="MINT" id="Q96GA7"/>
<dbReference type="STRING" id="9606.ENSP00000341117"/>
<dbReference type="DrugBank" id="DB00114">
    <property type="generic name" value="Pyridoxal phosphate"/>
</dbReference>
<dbReference type="GlyGen" id="Q96GA7">
    <property type="glycosylation" value="3 sites"/>
</dbReference>
<dbReference type="iPTMnet" id="Q96GA7"/>
<dbReference type="MetOSite" id="Q96GA7"/>
<dbReference type="PhosphoSitePlus" id="Q96GA7"/>
<dbReference type="BioMuta" id="SDSL"/>
<dbReference type="DMDM" id="74731799"/>
<dbReference type="jPOST" id="Q96GA7"/>
<dbReference type="MassIVE" id="Q96GA7"/>
<dbReference type="PaxDb" id="9606-ENSP00000385790"/>
<dbReference type="PeptideAtlas" id="Q96GA7"/>
<dbReference type="ProteomicsDB" id="76609"/>
<dbReference type="Pumba" id="Q96GA7"/>
<dbReference type="Antibodypedia" id="31274">
    <property type="antibodies" value="297 antibodies from 26 providers"/>
</dbReference>
<dbReference type="DNASU" id="113675"/>
<dbReference type="Ensembl" id="ENST00000345635.8">
    <property type="protein sequence ID" value="ENSP00000341117.4"/>
    <property type="gene ID" value="ENSG00000139410.15"/>
</dbReference>
<dbReference type="Ensembl" id="ENST00000403593.9">
    <property type="protein sequence ID" value="ENSP00000385790.4"/>
    <property type="gene ID" value="ENSG00000139410.15"/>
</dbReference>
<dbReference type="GeneID" id="113675"/>
<dbReference type="KEGG" id="hsa:113675"/>
<dbReference type="MANE-Select" id="ENST00000403593.9">
    <property type="protein sequence ID" value="ENSP00000385790.4"/>
    <property type="RefSeq nucleotide sequence ID" value="NM_001304993.2"/>
    <property type="RefSeq protein sequence ID" value="NP_001291922.1"/>
</dbReference>
<dbReference type="UCSC" id="uc009zwh.4">
    <property type="organism name" value="human"/>
</dbReference>
<dbReference type="AGR" id="HGNC:30404"/>
<dbReference type="CTD" id="113675"/>
<dbReference type="DisGeNET" id="113675"/>
<dbReference type="GeneCards" id="SDSL"/>
<dbReference type="HGNC" id="HGNC:30404">
    <property type="gene designation" value="SDSL"/>
</dbReference>
<dbReference type="HPA" id="ENSG00000139410">
    <property type="expression patterns" value="Tissue enhanced (liver)"/>
</dbReference>
<dbReference type="MIM" id="620735">
    <property type="type" value="gene"/>
</dbReference>
<dbReference type="neXtProt" id="NX_Q96GA7"/>
<dbReference type="OpenTargets" id="ENSG00000139410"/>
<dbReference type="PharmGKB" id="PA134862016"/>
<dbReference type="VEuPathDB" id="HostDB:ENSG00000139410"/>
<dbReference type="eggNOG" id="KOG1250">
    <property type="taxonomic scope" value="Eukaryota"/>
</dbReference>
<dbReference type="GeneTree" id="ENSGT00940000160713"/>
<dbReference type="HOGENOM" id="CLU_021152_3_0_1"/>
<dbReference type="InParanoid" id="Q96GA7"/>
<dbReference type="OMA" id="DGWVNIH"/>
<dbReference type="OrthoDB" id="7773036at2759"/>
<dbReference type="PAN-GO" id="Q96GA7">
    <property type="GO annotations" value="5 GO annotations based on evolutionary models"/>
</dbReference>
<dbReference type="PhylomeDB" id="Q96GA7"/>
<dbReference type="TreeFam" id="TF329014"/>
<dbReference type="BioCyc" id="MetaCyc:HS06616-MONOMER"/>
<dbReference type="BRENDA" id="4.3.1.17">
    <property type="organism ID" value="2681"/>
</dbReference>
<dbReference type="PathwayCommons" id="Q96GA7"/>
<dbReference type="Reactome" id="R-HSA-8849175">
    <property type="pathway name" value="Threonine catabolism"/>
</dbReference>
<dbReference type="SABIO-RK" id="Q96GA7"/>
<dbReference type="SignaLink" id="Q96GA7"/>
<dbReference type="BioGRID-ORCS" id="113675">
    <property type="hits" value="13 hits in 1163 CRISPR screens"/>
</dbReference>
<dbReference type="ChiTaRS" id="SDSL">
    <property type="organism name" value="human"/>
</dbReference>
<dbReference type="EvolutionaryTrace" id="Q96GA7"/>
<dbReference type="GenomeRNAi" id="113675"/>
<dbReference type="Pharos" id="Q96GA7">
    <property type="development level" value="Tbio"/>
</dbReference>
<dbReference type="PRO" id="PR:Q96GA7"/>
<dbReference type="Proteomes" id="UP000005640">
    <property type="component" value="Chromosome 12"/>
</dbReference>
<dbReference type="RNAct" id="Q96GA7">
    <property type="molecule type" value="protein"/>
</dbReference>
<dbReference type="Bgee" id="ENSG00000139410">
    <property type="expression patterns" value="Expressed in right lobe of liver and 107 other cell types or tissues"/>
</dbReference>
<dbReference type="ExpressionAtlas" id="Q96GA7">
    <property type="expression patterns" value="baseline and differential"/>
</dbReference>
<dbReference type="GO" id="GO:0005829">
    <property type="term" value="C:cytosol"/>
    <property type="evidence" value="ECO:0000304"/>
    <property type="project" value="Reactome"/>
</dbReference>
<dbReference type="GO" id="GO:0008881">
    <property type="term" value="F:glutamate racemase activity"/>
    <property type="evidence" value="ECO:0000250"/>
    <property type="project" value="UniProtKB"/>
</dbReference>
<dbReference type="GO" id="GO:0042802">
    <property type="term" value="F:identical protein binding"/>
    <property type="evidence" value="ECO:0000353"/>
    <property type="project" value="IntAct"/>
</dbReference>
<dbReference type="GO" id="GO:0003941">
    <property type="term" value="F:L-serine ammonia-lyase activity"/>
    <property type="evidence" value="ECO:0000314"/>
    <property type="project" value="UniProtKB"/>
</dbReference>
<dbReference type="GO" id="GO:0030170">
    <property type="term" value="F:pyridoxal phosphate binding"/>
    <property type="evidence" value="ECO:0007669"/>
    <property type="project" value="InterPro"/>
</dbReference>
<dbReference type="GO" id="GO:0004794">
    <property type="term" value="F:threonine deaminase activity"/>
    <property type="evidence" value="ECO:0000314"/>
    <property type="project" value="UniProtKB"/>
</dbReference>
<dbReference type="GO" id="GO:0006565">
    <property type="term" value="P:L-serine catabolic process"/>
    <property type="evidence" value="ECO:0000318"/>
    <property type="project" value="GO_Central"/>
</dbReference>
<dbReference type="GO" id="GO:0006629">
    <property type="term" value="P:lipid metabolic process"/>
    <property type="evidence" value="ECO:0007669"/>
    <property type="project" value="UniProtKB-KW"/>
</dbReference>
<dbReference type="FunFam" id="3.40.50.1100:FF:000031">
    <property type="entry name" value="L-serine dehydratase/L-threonine deaminase"/>
    <property type="match status" value="1"/>
</dbReference>
<dbReference type="Gene3D" id="3.40.50.1100">
    <property type="match status" value="2"/>
</dbReference>
<dbReference type="InterPro" id="IPR050147">
    <property type="entry name" value="Ser/Thr_Dehydratase"/>
</dbReference>
<dbReference type="InterPro" id="IPR000634">
    <property type="entry name" value="Ser/Thr_deHydtase_PyrdxlP-BS"/>
</dbReference>
<dbReference type="InterPro" id="IPR001926">
    <property type="entry name" value="TrpB-like_PALP"/>
</dbReference>
<dbReference type="InterPro" id="IPR036052">
    <property type="entry name" value="TrpB-like_PALP_sf"/>
</dbReference>
<dbReference type="PANTHER" id="PTHR48078:SF16">
    <property type="entry name" value="SERINE DEHYDRATASE-LIKE"/>
    <property type="match status" value="1"/>
</dbReference>
<dbReference type="PANTHER" id="PTHR48078">
    <property type="entry name" value="THREONINE DEHYDRATASE, MITOCHONDRIAL-RELATED"/>
    <property type="match status" value="1"/>
</dbReference>
<dbReference type="Pfam" id="PF00291">
    <property type="entry name" value="PALP"/>
    <property type="match status" value="1"/>
</dbReference>
<dbReference type="SUPFAM" id="SSF53686">
    <property type="entry name" value="Tryptophan synthase beta subunit-like PLP-dependent enzymes"/>
    <property type="match status" value="1"/>
</dbReference>
<dbReference type="PROSITE" id="PS00165">
    <property type="entry name" value="DEHYDRATASE_SER_THR"/>
    <property type="match status" value="1"/>
</dbReference>
<gene>
    <name type="primary">SDSL</name>
</gene>
<protein>
    <recommendedName>
        <fullName>Serine dehydratase-like</fullName>
    </recommendedName>
    <alternativeName>
        <fullName evidence="4">Cancerous serine dehydratase</fullName>
        <shortName evidence="4">cSDH</shortName>
    </alternativeName>
    <alternativeName>
        <fullName>Glutamate racemase</fullName>
        <ecNumber evidence="1">5.1.1.3</ecNumber>
    </alternativeName>
    <alternativeName>
        <fullName>L-serine deaminase</fullName>
        <ecNumber evidence="2 3">4.3.1.17</ecNumber>
    </alternativeName>
    <alternativeName>
        <fullName>L-serine dehydratase/L-threonine deaminase</fullName>
        <shortName>SDHL</shortName>
    </alternativeName>
    <alternativeName>
        <fullName>L-threonine dehydratase</fullName>
        <shortName>TDH</shortName>
        <ecNumber evidence="2 3">4.3.1.19</ecNumber>
    </alternativeName>
    <alternativeName>
        <fullName>Serine dehydratase 2</fullName>
        <shortName>SDH 2</shortName>
    </alternativeName>
</protein>
<organism>
    <name type="scientific">Homo sapiens</name>
    <name type="common">Human</name>
    <dbReference type="NCBI Taxonomy" id="9606"/>
    <lineage>
        <taxon>Eukaryota</taxon>
        <taxon>Metazoa</taxon>
        <taxon>Chordata</taxon>
        <taxon>Craniata</taxon>
        <taxon>Vertebrata</taxon>
        <taxon>Euteleostomi</taxon>
        <taxon>Mammalia</taxon>
        <taxon>Eutheria</taxon>
        <taxon>Euarchontoglires</taxon>
        <taxon>Primates</taxon>
        <taxon>Haplorrhini</taxon>
        <taxon>Catarrhini</taxon>
        <taxon>Hominidae</taxon>
        <taxon>Homo</taxon>
    </lineage>
</organism>
<keyword id="KW-0002">3D-structure</keyword>
<keyword id="KW-0007">Acetylation</keyword>
<keyword id="KW-0413">Isomerase</keyword>
<keyword id="KW-0443">Lipid metabolism</keyword>
<keyword id="KW-0456">Lyase</keyword>
<keyword id="KW-1267">Proteomics identification</keyword>
<keyword id="KW-0663">Pyridoxal phosphate</keyword>
<keyword id="KW-1185">Reference proteome</keyword>
<sequence length="329" mass="34674">MDGPVAEHAKQEPFHVVTPLLESWALSQVAGMPVFLKCENVQPSGSFKIRGIGHFCQEMAKKGCRHLVCSSGGNAGIAAAYAARKLGIPATIVLPESTSLQVVQRLQGEGAEVQLTGKVWDEANLRAQELAKRDGWENVPPFDHPLIWKGHASLVQELKAVLRTPPGALVLAVGGGGLLAGVVAGLLEVGWQHVPIIAMETHGAHCFNAAITAGKLVTLPDITSVAKSLGAKTVAARALECMQVCKIHSEVVEDTEAVSAVQQLLDDERMLVEPACGAALAAIYSGLLRRLQAEGCLPPSLTSVVVIVCGGNNINSRELQALKTHLGQV</sequence>
<accession>Q96GA7</accession>
<proteinExistence type="evidence at protein level"/>
<evidence type="ECO:0000250" key="1">
    <source>
        <dbReference type="UniProtKB" id="A0A6N3IN21"/>
    </source>
</evidence>
<evidence type="ECO:0000269" key="2">
    <source>
    </source>
</evidence>
<evidence type="ECO:0000269" key="3">
    <source>
    </source>
</evidence>
<evidence type="ECO:0000303" key="4">
    <source>
    </source>
</evidence>
<evidence type="ECO:0000305" key="5"/>
<evidence type="ECO:0000305" key="6">
    <source>
    </source>
</evidence>
<evidence type="ECO:0007744" key="7">
    <source>
    </source>
</evidence>
<evidence type="ECO:0007829" key="8">
    <source>
        <dbReference type="PDB" id="2RKB"/>
    </source>
</evidence>